<protein>
    <recommendedName>
        <fullName>Calcium-responsive transcription factor</fullName>
    </recommendedName>
    <alternativeName>
        <fullName>Amyotrophic lateral sclerosis 2 chromosomal region candidate gene 8 protein</fullName>
    </alternativeName>
</protein>
<name>CARTF_BOVIN</name>
<feature type="chain" id="PRO_0000076171" description="Calcium-responsive transcription factor">
    <location>
        <begin position="1"/>
        <end position="703"/>
    </location>
</feature>
<feature type="region of interest" description="Disordered" evidence="2">
    <location>
        <begin position="1"/>
        <end position="61"/>
    </location>
</feature>
<feature type="region of interest" description="Disordered" evidence="2">
    <location>
        <begin position="130"/>
        <end position="150"/>
    </location>
</feature>
<feature type="region of interest" description="Disordered" evidence="2">
    <location>
        <begin position="517"/>
        <end position="539"/>
    </location>
</feature>
<feature type="compositionally biased region" description="Basic and acidic residues" evidence="2">
    <location>
        <begin position="9"/>
        <end position="22"/>
    </location>
</feature>
<feature type="compositionally biased region" description="Polar residues" evidence="2">
    <location>
        <begin position="23"/>
        <end position="34"/>
    </location>
</feature>
<organism>
    <name type="scientific">Bos taurus</name>
    <name type="common">Bovine</name>
    <dbReference type="NCBI Taxonomy" id="9913"/>
    <lineage>
        <taxon>Eukaryota</taxon>
        <taxon>Metazoa</taxon>
        <taxon>Chordata</taxon>
        <taxon>Craniata</taxon>
        <taxon>Vertebrata</taxon>
        <taxon>Euteleostomi</taxon>
        <taxon>Mammalia</taxon>
        <taxon>Eutheria</taxon>
        <taxon>Laurasiatheria</taxon>
        <taxon>Artiodactyla</taxon>
        <taxon>Ruminantia</taxon>
        <taxon>Pecora</taxon>
        <taxon>Bovidae</taxon>
        <taxon>Bovinae</taxon>
        <taxon>Bos</taxon>
    </lineage>
</organism>
<sequence length="703" mass="78135">MEQSVDSLKVNHNDSEESKTDSQHLTYMDSSEPSFGQDGSPRVLPVTTPEEDGSLTSQNIPGPLTQAQILSAEQFHLVDQNGQPVQYELQSLGDSNAQMMIVASPSENGQVLRVIPSPQTGMTQVIIPQGPLVDENSPQDVSEEKPSDRNLPAVRVDALADSNSSYVLHPQASLTLPKKTVTRILEEPLLAPLQPLSSNTPIWACRLRSCEKIGDSYRGYCVSETELESVLTFHKQQTQSVWGTRQSPSPAKPATRLMWKSQYVPYDGIPFVNAGSRAVVMECQYGPRRKGFQLKKIGELENRSCQLYKATCPARIYIKKVQKFPDYRVPTDPKIDRKIIRMEQEKAFNLLKKNLVDAGGVLRWYVQLPTQQAHQYHELETPCLPLSSSSFPISSLEEEEAAIRDENCTLPSRLHPQVAHKIQELVSQGIEQVYAVRKQLRKFVERELFKPDEVPERHNLSFFPTVNDIRNHIHEVQKSLRNGDNICNSEIIPATLQWTTDSGNILRETVTVTLAEGNSQGESVSSKLETNQTRNSLSPEPAQLLSSLSSFQPKIFTHLQGLQLQPRFTSDGSPALISVNNHPSSSPSRLLDSVRSVVMNNNSLLLGQTHCLQTDTPLTPNSSISSTMSNLPGPDQNLVAVDQLVEVEDVEDTETLEGNVHRILLGNVQTIPIQIIDNPPVLSNFGSILKEPIFDCFGGPIKI</sequence>
<comment type="function">
    <text evidence="1">Acts as a transcriptional activator that mediates the calcium- and neuron-selective induction of BDNF exon III transcription. Binds to the consensus calcium-response element CaRE1 5'-CTATTTCGAG-3' sequence (By similarity).</text>
</comment>
<comment type="subcellular location">
    <subcellularLocation>
        <location evidence="1">Nucleus</location>
    </subcellularLocation>
</comment>
<comment type="domain">
    <text evidence="1">The N-terminus is necessary for DNA-binding. The C-terminus is necessary for transcriptional activation (By similarity).</text>
</comment>
<reference key="1">
    <citation type="journal article" date="2005" name="BMC Genomics">
        <title>Characterization of 954 bovine full-CDS cDNA sequences.</title>
        <authorList>
            <person name="Harhay G.P."/>
            <person name="Sonstegard T.S."/>
            <person name="Keele J.W."/>
            <person name="Heaton M.P."/>
            <person name="Clawson M.L."/>
            <person name="Snelling W.M."/>
            <person name="Wiedmann R.T."/>
            <person name="Van Tassell C.P."/>
            <person name="Smith T.P.L."/>
        </authorList>
    </citation>
    <scope>NUCLEOTIDE SEQUENCE [LARGE SCALE MRNA]</scope>
</reference>
<proteinExistence type="evidence at transcript level"/>
<dbReference type="EMBL" id="BT021831">
    <property type="protein sequence ID" value="AAX46678.1"/>
    <property type="molecule type" value="mRNA"/>
</dbReference>
<dbReference type="RefSeq" id="NP_001027465.1">
    <property type="nucleotide sequence ID" value="NM_001032294.1"/>
</dbReference>
<dbReference type="SMR" id="Q58CW6"/>
<dbReference type="FunCoup" id="Q58CW6">
    <property type="interactions" value="1775"/>
</dbReference>
<dbReference type="STRING" id="9913.ENSBTAP00000021288"/>
<dbReference type="PaxDb" id="9913-ENSBTAP00000021288"/>
<dbReference type="GeneID" id="509072"/>
<dbReference type="KEGG" id="bta:509072"/>
<dbReference type="CTD" id="79800"/>
<dbReference type="eggNOG" id="ENOG502QWYS">
    <property type="taxonomic scope" value="Eukaryota"/>
</dbReference>
<dbReference type="InParanoid" id="Q58CW6"/>
<dbReference type="OrthoDB" id="2668416at2759"/>
<dbReference type="Proteomes" id="UP000009136">
    <property type="component" value="Unplaced"/>
</dbReference>
<dbReference type="GO" id="GO:0005634">
    <property type="term" value="C:nucleus"/>
    <property type="evidence" value="ECO:0000250"/>
    <property type="project" value="UniProtKB"/>
</dbReference>
<dbReference type="GO" id="GO:0003677">
    <property type="term" value="F:DNA binding"/>
    <property type="evidence" value="ECO:0000250"/>
    <property type="project" value="UniProtKB"/>
</dbReference>
<dbReference type="GO" id="GO:0001228">
    <property type="term" value="F:DNA-binding transcription activator activity, RNA polymerase II-specific"/>
    <property type="evidence" value="ECO:0000250"/>
    <property type="project" value="UniProtKB"/>
</dbReference>
<dbReference type="GO" id="GO:0000981">
    <property type="term" value="F:DNA-binding transcription factor activity, RNA polymerase II-specific"/>
    <property type="evidence" value="ECO:0000318"/>
    <property type="project" value="GO_Central"/>
</dbReference>
<dbReference type="GO" id="GO:0000978">
    <property type="term" value="F:RNA polymerase II cis-regulatory region sequence-specific DNA binding"/>
    <property type="evidence" value="ECO:0000318"/>
    <property type="project" value="GO_Central"/>
</dbReference>
<dbReference type="GO" id="GO:0071277">
    <property type="term" value="P:cellular response to calcium ion"/>
    <property type="evidence" value="ECO:0000250"/>
    <property type="project" value="UniProtKB"/>
</dbReference>
<dbReference type="GO" id="GO:0006357">
    <property type="term" value="P:regulation of transcription by RNA polymerase II"/>
    <property type="evidence" value="ECO:0000318"/>
    <property type="project" value="GO_Central"/>
</dbReference>
<dbReference type="InterPro" id="IPR029309">
    <property type="entry name" value="CaRF"/>
</dbReference>
<dbReference type="PANTHER" id="PTHR14694">
    <property type="entry name" value="CALCIUM-RESPONSIVE TRANSCRIPTION FACTOR"/>
    <property type="match status" value="1"/>
</dbReference>
<dbReference type="PANTHER" id="PTHR14694:SF1">
    <property type="entry name" value="CALCIUM-RESPONSIVE TRANSCRIPTION FACTOR"/>
    <property type="match status" value="1"/>
</dbReference>
<dbReference type="Pfam" id="PF15299">
    <property type="entry name" value="ALS2CR8"/>
    <property type="match status" value="1"/>
</dbReference>
<gene>
    <name type="primary">CARF</name>
    <name type="synonym">ALS2CR8</name>
</gene>
<keyword id="KW-0010">Activator</keyword>
<keyword id="KW-0238">DNA-binding</keyword>
<keyword id="KW-0539">Nucleus</keyword>
<keyword id="KW-1185">Reference proteome</keyword>
<keyword id="KW-0804">Transcription</keyword>
<keyword id="KW-0805">Transcription regulation</keyword>
<evidence type="ECO:0000250" key="1"/>
<evidence type="ECO:0000256" key="2">
    <source>
        <dbReference type="SAM" id="MobiDB-lite"/>
    </source>
</evidence>
<accession>Q58CW6</accession>